<keyword id="KW-0687">Ribonucleoprotein</keyword>
<keyword id="KW-0689">Ribosomal protein</keyword>
<accession>P66521</accession>
<accession>Q99TS1</accession>
<feature type="chain" id="PRO_0000178375" description="Small ribosomal subunit protein bS21">
    <location>
        <begin position="1"/>
        <end position="58"/>
    </location>
</feature>
<name>RS21_STAAN</name>
<evidence type="ECO:0000255" key="1">
    <source>
        <dbReference type="HAMAP-Rule" id="MF_00358"/>
    </source>
</evidence>
<evidence type="ECO:0000305" key="2"/>
<proteinExistence type="evidence at protein level"/>
<dbReference type="EMBL" id="BA000018">
    <property type="protein sequence ID" value="BAB42667.1"/>
    <property type="molecule type" value="Genomic_DNA"/>
</dbReference>
<dbReference type="PIR" id="F89938">
    <property type="entry name" value="F89938"/>
</dbReference>
<dbReference type="RefSeq" id="WP_000048060.1">
    <property type="nucleotide sequence ID" value="NC_002745.2"/>
</dbReference>
<dbReference type="SMR" id="P66521"/>
<dbReference type="EnsemblBacteria" id="BAB42667">
    <property type="protein sequence ID" value="BAB42667"/>
    <property type="gene ID" value="BAB42667"/>
</dbReference>
<dbReference type="GeneID" id="98345946"/>
<dbReference type="KEGG" id="sau:SA1404"/>
<dbReference type="HOGENOM" id="CLU_159258_3_2_9"/>
<dbReference type="GO" id="GO:1990904">
    <property type="term" value="C:ribonucleoprotein complex"/>
    <property type="evidence" value="ECO:0007669"/>
    <property type="project" value="UniProtKB-KW"/>
</dbReference>
<dbReference type="GO" id="GO:0005840">
    <property type="term" value="C:ribosome"/>
    <property type="evidence" value="ECO:0007669"/>
    <property type="project" value="UniProtKB-KW"/>
</dbReference>
<dbReference type="GO" id="GO:0003735">
    <property type="term" value="F:structural constituent of ribosome"/>
    <property type="evidence" value="ECO:0007669"/>
    <property type="project" value="InterPro"/>
</dbReference>
<dbReference type="GO" id="GO:0006412">
    <property type="term" value="P:translation"/>
    <property type="evidence" value="ECO:0007669"/>
    <property type="project" value="UniProtKB-UniRule"/>
</dbReference>
<dbReference type="Gene3D" id="1.20.5.1150">
    <property type="entry name" value="Ribosomal protein S8"/>
    <property type="match status" value="1"/>
</dbReference>
<dbReference type="HAMAP" id="MF_00358">
    <property type="entry name" value="Ribosomal_bS21"/>
    <property type="match status" value="1"/>
</dbReference>
<dbReference type="InterPro" id="IPR001911">
    <property type="entry name" value="Ribosomal_bS21"/>
</dbReference>
<dbReference type="InterPro" id="IPR018278">
    <property type="entry name" value="Ribosomal_bS21_CS"/>
</dbReference>
<dbReference type="InterPro" id="IPR038380">
    <property type="entry name" value="Ribosomal_bS21_sf"/>
</dbReference>
<dbReference type="NCBIfam" id="TIGR00030">
    <property type="entry name" value="S21p"/>
    <property type="match status" value="1"/>
</dbReference>
<dbReference type="PANTHER" id="PTHR21109">
    <property type="entry name" value="MITOCHONDRIAL 28S RIBOSOMAL PROTEIN S21"/>
    <property type="match status" value="1"/>
</dbReference>
<dbReference type="PANTHER" id="PTHR21109:SF22">
    <property type="entry name" value="SMALL RIBOSOMAL SUBUNIT PROTEIN BS21"/>
    <property type="match status" value="1"/>
</dbReference>
<dbReference type="Pfam" id="PF01165">
    <property type="entry name" value="Ribosomal_S21"/>
    <property type="match status" value="1"/>
</dbReference>
<dbReference type="PRINTS" id="PR00976">
    <property type="entry name" value="RIBOSOMALS21"/>
</dbReference>
<dbReference type="PROSITE" id="PS01181">
    <property type="entry name" value="RIBOSOMAL_S21"/>
    <property type="match status" value="1"/>
</dbReference>
<gene>
    <name evidence="1" type="primary">rpsU</name>
    <name type="ordered locus">SA1404</name>
</gene>
<protein>
    <recommendedName>
        <fullName evidence="1">Small ribosomal subunit protein bS21</fullName>
    </recommendedName>
    <alternativeName>
        <fullName evidence="2">30S ribosomal protein S21</fullName>
    </alternativeName>
</protein>
<reference key="1">
    <citation type="journal article" date="2001" name="Lancet">
        <title>Whole genome sequencing of meticillin-resistant Staphylococcus aureus.</title>
        <authorList>
            <person name="Kuroda M."/>
            <person name="Ohta T."/>
            <person name="Uchiyama I."/>
            <person name="Baba T."/>
            <person name="Yuzawa H."/>
            <person name="Kobayashi I."/>
            <person name="Cui L."/>
            <person name="Oguchi A."/>
            <person name="Aoki K."/>
            <person name="Nagai Y."/>
            <person name="Lian J.-Q."/>
            <person name="Ito T."/>
            <person name="Kanamori M."/>
            <person name="Matsumaru H."/>
            <person name="Maruyama A."/>
            <person name="Murakami H."/>
            <person name="Hosoyama A."/>
            <person name="Mizutani-Ui Y."/>
            <person name="Takahashi N.K."/>
            <person name="Sawano T."/>
            <person name="Inoue R."/>
            <person name="Kaito C."/>
            <person name="Sekimizu K."/>
            <person name="Hirakawa H."/>
            <person name="Kuhara S."/>
            <person name="Goto S."/>
            <person name="Yabuzaki J."/>
            <person name="Kanehisa M."/>
            <person name="Yamashita A."/>
            <person name="Oshima K."/>
            <person name="Furuya K."/>
            <person name="Yoshino C."/>
            <person name="Shiba T."/>
            <person name="Hattori M."/>
            <person name="Ogasawara N."/>
            <person name="Hayashi H."/>
            <person name="Hiramatsu K."/>
        </authorList>
    </citation>
    <scope>NUCLEOTIDE SEQUENCE [LARGE SCALE GENOMIC DNA]</scope>
    <source>
        <strain>N315</strain>
    </source>
</reference>
<reference key="2">
    <citation type="submission" date="2007-10" db="UniProtKB">
        <title>Shotgun proteomic analysis of total and membrane protein extracts of S. aureus strain N315.</title>
        <authorList>
            <person name="Vaezzadeh A.R."/>
            <person name="Deshusses J."/>
            <person name="Lescuyer P."/>
            <person name="Hochstrasser D.F."/>
        </authorList>
    </citation>
    <scope>IDENTIFICATION BY MASS SPECTROMETRY [LARGE SCALE ANALYSIS]</scope>
    <source>
        <strain>N315</strain>
    </source>
</reference>
<comment type="similarity">
    <text evidence="1">Belongs to the bacterial ribosomal protein bS21 family.</text>
</comment>
<organism>
    <name type="scientific">Staphylococcus aureus (strain N315)</name>
    <dbReference type="NCBI Taxonomy" id="158879"/>
    <lineage>
        <taxon>Bacteria</taxon>
        <taxon>Bacillati</taxon>
        <taxon>Bacillota</taxon>
        <taxon>Bacilli</taxon>
        <taxon>Bacillales</taxon>
        <taxon>Staphylococcaceae</taxon>
        <taxon>Staphylococcus</taxon>
    </lineage>
</organism>
<sequence>MSKTVVRKNESLEDALRRFKRSVSKSGTIQEVRKREFYEKPSVKRKKKSEAARKRKFK</sequence>